<comment type="function">
    <text evidence="1">Bidirectionally degrades single-stranded DNA into large acid-insoluble oligonucleotides, which are then degraded further into small acid-soluble oligonucleotides.</text>
</comment>
<comment type="catalytic activity">
    <reaction evidence="1">
        <text>Exonucleolytic cleavage in either 5'- to 3'- or 3'- to 5'-direction to yield nucleoside 5'-phosphates.</text>
        <dbReference type="EC" id="3.1.11.6"/>
    </reaction>
</comment>
<comment type="subunit">
    <text evidence="1">Heterooligomer composed of large and small subunits.</text>
</comment>
<comment type="subcellular location">
    <subcellularLocation>
        <location evidence="1">Cytoplasm</location>
    </subcellularLocation>
</comment>
<comment type="similarity">
    <text evidence="1">Belongs to the XseA family.</text>
</comment>
<dbReference type="EC" id="3.1.11.6" evidence="1"/>
<dbReference type="EMBL" id="AE001439">
    <property type="protein sequence ID" value="AAD05833.1"/>
    <property type="molecule type" value="Genomic_DNA"/>
</dbReference>
<dbReference type="PIR" id="E71955">
    <property type="entry name" value="E71955"/>
</dbReference>
<dbReference type="RefSeq" id="WP_000558308.1">
    <property type="nucleotide sequence ID" value="NC_000921.1"/>
</dbReference>
<dbReference type="SMR" id="Q9ZMH7"/>
<dbReference type="KEGG" id="hpj:jhp_0243"/>
<dbReference type="PATRIC" id="fig|85963.30.peg.771"/>
<dbReference type="eggNOG" id="COG1570">
    <property type="taxonomic scope" value="Bacteria"/>
</dbReference>
<dbReference type="Proteomes" id="UP000000804">
    <property type="component" value="Chromosome"/>
</dbReference>
<dbReference type="GO" id="GO:0005737">
    <property type="term" value="C:cytoplasm"/>
    <property type="evidence" value="ECO:0007669"/>
    <property type="project" value="UniProtKB-SubCell"/>
</dbReference>
<dbReference type="GO" id="GO:0009318">
    <property type="term" value="C:exodeoxyribonuclease VII complex"/>
    <property type="evidence" value="ECO:0007669"/>
    <property type="project" value="InterPro"/>
</dbReference>
<dbReference type="GO" id="GO:0008855">
    <property type="term" value="F:exodeoxyribonuclease VII activity"/>
    <property type="evidence" value="ECO:0007669"/>
    <property type="project" value="UniProtKB-UniRule"/>
</dbReference>
<dbReference type="GO" id="GO:0003676">
    <property type="term" value="F:nucleic acid binding"/>
    <property type="evidence" value="ECO:0007669"/>
    <property type="project" value="InterPro"/>
</dbReference>
<dbReference type="GO" id="GO:0006308">
    <property type="term" value="P:DNA catabolic process"/>
    <property type="evidence" value="ECO:0007669"/>
    <property type="project" value="UniProtKB-UniRule"/>
</dbReference>
<dbReference type="CDD" id="cd04489">
    <property type="entry name" value="ExoVII_LU_OBF"/>
    <property type="match status" value="1"/>
</dbReference>
<dbReference type="Gene3D" id="2.40.50.1010">
    <property type="match status" value="1"/>
</dbReference>
<dbReference type="HAMAP" id="MF_00378">
    <property type="entry name" value="Exonuc_7_L"/>
    <property type="match status" value="1"/>
</dbReference>
<dbReference type="InterPro" id="IPR003753">
    <property type="entry name" value="Exonuc_VII_L"/>
</dbReference>
<dbReference type="InterPro" id="IPR020579">
    <property type="entry name" value="Exonuc_VII_lsu_C"/>
</dbReference>
<dbReference type="InterPro" id="IPR025824">
    <property type="entry name" value="OB-fold_nuc-bd_dom"/>
</dbReference>
<dbReference type="NCBIfam" id="TIGR00237">
    <property type="entry name" value="xseA"/>
    <property type="match status" value="1"/>
</dbReference>
<dbReference type="PANTHER" id="PTHR30008">
    <property type="entry name" value="EXODEOXYRIBONUCLEASE 7 LARGE SUBUNIT"/>
    <property type="match status" value="1"/>
</dbReference>
<dbReference type="PANTHER" id="PTHR30008:SF0">
    <property type="entry name" value="EXODEOXYRIBONUCLEASE 7 LARGE SUBUNIT"/>
    <property type="match status" value="1"/>
</dbReference>
<dbReference type="Pfam" id="PF02601">
    <property type="entry name" value="Exonuc_VII_L"/>
    <property type="match status" value="1"/>
</dbReference>
<dbReference type="Pfam" id="PF13742">
    <property type="entry name" value="tRNA_anti_2"/>
    <property type="match status" value="1"/>
</dbReference>
<gene>
    <name evidence="1" type="primary">xseA</name>
    <name type="ordered locus">jhp_0243</name>
</gene>
<keyword id="KW-0963">Cytoplasm</keyword>
<keyword id="KW-0269">Exonuclease</keyword>
<keyword id="KW-0378">Hydrolase</keyword>
<keyword id="KW-0540">Nuclease</keyword>
<proteinExistence type="inferred from homology"/>
<name>EX7L_HELPJ</name>
<organism>
    <name type="scientific">Helicobacter pylori (strain J99 / ATCC 700824)</name>
    <name type="common">Campylobacter pylori J99</name>
    <dbReference type="NCBI Taxonomy" id="85963"/>
    <lineage>
        <taxon>Bacteria</taxon>
        <taxon>Pseudomonadati</taxon>
        <taxon>Campylobacterota</taxon>
        <taxon>Epsilonproteobacteria</taxon>
        <taxon>Campylobacterales</taxon>
        <taxon>Helicobacteraceae</taxon>
        <taxon>Helicobacter</taxon>
    </lineage>
</organism>
<reference key="1">
    <citation type="journal article" date="1999" name="Nature">
        <title>Genomic sequence comparison of two unrelated isolates of the human gastric pathogen Helicobacter pylori.</title>
        <authorList>
            <person name="Alm R.A."/>
            <person name="Ling L.-S.L."/>
            <person name="Moir D.T."/>
            <person name="King B.L."/>
            <person name="Brown E.D."/>
            <person name="Doig P.C."/>
            <person name="Smith D.R."/>
            <person name="Noonan B."/>
            <person name="Guild B.C."/>
            <person name="deJonge B.L."/>
            <person name="Carmel G."/>
            <person name="Tummino P.J."/>
            <person name="Caruso A."/>
            <person name="Uria-Nickelsen M."/>
            <person name="Mills D.M."/>
            <person name="Ives C."/>
            <person name="Gibson R."/>
            <person name="Merberg D."/>
            <person name="Mills S.D."/>
            <person name="Jiang Q."/>
            <person name="Taylor D.E."/>
            <person name="Vovis G.F."/>
            <person name="Trust T.J."/>
        </authorList>
    </citation>
    <scope>NUCLEOTIDE SEQUENCE [LARGE SCALE GENOMIC DNA]</scope>
    <source>
        <strain>J99 / ATCC 700824</strain>
    </source>
</reference>
<sequence>MHVLSVSEINAQIKALLEATFLQVRVQGEVSNLTIHKVSGHAYFSLKDSQSVIRCVLFKGNANRLKFALKEGQEMVVFGGISVYAPRGDYQINCFEIEPKEIGSLTLALEQLKEKLRLKGYFDEANKLPKPNFPKRVAVITSQNSAAWADMKKIASKRWPMCELVCINTLMQGEGCVQSVVESIAYADSFYDTKNAFDAIVVARGGGSMEDLYSFNDEKIADALYLAKTFSMSAIGHESDFLLSDSVADLRASTPSNAMEILLPSSDEWLQRLDGFNVKLHRSFKTLLHQKKAHLEHLAASLKRLSFENKHHLNALKLEKLTIALDNKTLEFLRLKKTLLEKISTQLSTSPFLQTKTERLNRLENALKLAYANLKLPQFGALVSKNHQAIELEALKRGDKIELSNEKARASAEILSVDRV</sequence>
<protein>
    <recommendedName>
        <fullName evidence="1">Exodeoxyribonuclease 7 large subunit</fullName>
        <ecNumber evidence="1">3.1.11.6</ecNumber>
    </recommendedName>
    <alternativeName>
        <fullName evidence="1">Exodeoxyribonuclease VII large subunit</fullName>
        <shortName evidence="1">Exonuclease VII large subunit</shortName>
    </alternativeName>
</protein>
<evidence type="ECO:0000255" key="1">
    <source>
        <dbReference type="HAMAP-Rule" id="MF_00378"/>
    </source>
</evidence>
<feature type="chain" id="PRO_0000197851" description="Exodeoxyribonuclease 7 large subunit">
    <location>
        <begin position="1"/>
        <end position="420"/>
    </location>
</feature>
<accession>Q9ZMH7</accession>